<comment type="function">
    <text evidence="2 5 8 9 10">Spindle pole body (SPB) component that acts as the gamma-tubulin complex-binding protein of the SPB outer plaque (PubMed:9670012). Anchors cytoplasmic microtubules at the half bridge of the spindle pole body (SPB) and accordingly functions in nuclear position and spindle orientation, including anaphase spindle migration into the bud (PubMed:10428957, PubMed:9718373). Recruits KIN4 kinase to both SPBs when cytoplasmic microtubules are defective, to delay mitotic exit (PubMed:17967947). Links cytoplasmic microtubules with spindle orientation checkpoint (SPOC) components and, therefore, could function as part of the sensors of spindle orientation defects (PubMed:17967947, PubMed:9606209). Required for cytoplasmic astral microtubule growth during mitosis (PubMed:9606209, PubMed:9670012). Is strictly required for mating and karyogamy (PubMed:10428957).</text>
</comment>
<comment type="subunit">
    <text evidence="2 5 6 8 9">Homooligomer. Interacts with CDC5, KAR1, KIN4, SPC97, SPC98, STU2 and TUB4.</text>
</comment>
<comment type="subcellular location">
    <subcellularLocation>
        <location evidence="2 3 7 8 9 10">Cytoplasm</location>
        <location evidence="2 3 7 8 9 10">Cytoskeleton</location>
        <location evidence="2 3 7 8 9 10">Microtubule organizing center</location>
        <location evidence="2 3 7 8 9 10">Spindle pole body</location>
    </subcellularLocation>
    <text>localized at the outer plaque and the bridge of the spindle pole body.</text>
</comment>
<comment type="PTM">
    <text evidence="5 6">Phosphorylated by CDC5.</text>
</comment>
<comment type="miscellaneous">
    <text evidence="4">Present with 639 molecules/cell in log phase SD medium.</text>
</comment>
<evidence type="ECO:0000256" key="1">
    <source>
        <dbReference type="SAM" id="MobiDB-lite"/>
    </source>
</evidence>
<evidence type="ECO:0000269" key="2">
    <source>
    </source>
</evidence>
<evidence type="ECO:0000269" key="3">
    <source>
    </source>
</evidence>
<evidence type="ECO:0000269" key="4">
    <source>
    </source>
</evidence>
<evidence type="ECO:0000269" key="5">
    <source>
    </source>
</evidence>
<evidence type="ECO:0000269" key="6">
    <source>
    </source>
</evidence>
<evidence type="ECO:0000269" key="7">
    <source>
    </source>
</evidence>
<evidence type="ECO:0000269" key="8">
    <source>
    </source>
</evidence>
<evidence type="ECO:0000269" key="9">
    <source>
    </source>
</evidence>
<evidence type="ECO:0000269" key="10">
    <source>
    </source>
</evidence>
<evidence type="ECO:0000305" key="11"/>
<evidence type="ECO:0007829" key="12">
    <source>
        <dbReference type="PDB" id="6MF5"/>
    </source>
</evidence>
<proteinExistence type="evidence at protein level"/>
<name>MBO1_YEAST</name>
<keyword id="KW-0002">3D-structure</keyword>
<keyword id="KW-0131">Cell cycle</keyword>
<keyword id="KW-0132">Cell division</keyword>
<keyword id="KW-0963">Cytoplasm</keyword>
<keyword id="KW-0206">Cytoskeleton</keyword>
<keyword id="KW-0415">Karyogamy</keyword>
<keyword id="KW-0597">Phosphoprotein</keyword>
<keyword id="KW-1185">Reference proteome</keyword>
<gene>
    <name type="primary">SPC72</name>
    <name type="synonym">LDB4</name>
    <name type="synonym">SPI6</name>
    <name type="ordered locus">YAL047C</name>
    <name type="ORF">FUN42</name>
</gene>
<reference key="1">
    <citation type="journal article" date="1995" name="Proc. Natl. Acad. Sci. U.S.A.">
        <title>The nucleotide sequence of chromosome I from Saccharomyces cerevisiae.</title>
        <authorList>
            <person name="Bussey H."/>
            <person name="Kaback D.B."/>
            <person name="Zhong W.-W."/>
            <person name="Vo D.H."/>
            <person name="Clark M.W."/>
            <person name="Fortin N."/>
            <person name="Hall J."/>
            <person name="Ouellette B.F.F."/>
            <person name="Keng T."/>
            <person name="Barton A.B."/>
            <person name="Su Y."/>
            <person name="Davies C.J."/>
            <person name="Storms R.K."/>
        </authorList>
    </citation>
    <scope>NUCLEOTIDE SEQUENCE [LARGE SCALE GENOMIC DNA]</scope>
    <source>
        <strain>ATCC 204508 / S288c</strain>
    </source>
</reference>
<reference key="2">
    <citation type="journal article" date="2014" name="G3 (Bethesda)">
        <title>The reference genome sequence of Saccharomyces cerevisiae: Then and now.</title>
        <authorList>
            <person name="Engel S.R."/>
            <person name="Dietrich F.S."/>
            <person name="Fisk D.G."/>
            <person name="Binkley G."/>
            <person name="Balakrishnan R."/>
            <person name="Costanzo M.C."/>
            <person name="Dwight S.S."/>
            <person name="Hitz B.C."/>
            <person name="Karra K."/>
            <person name="Nash R.S."/>
            <person name="Weng S."/>
            <person name="Wong E.D."/>
            <person name="Lloyd P."/>
            <person name="Skrzypek M.S."/>
            <person name="Miyasato S.R."/>
            <person name="Simison M."/>
            <person name="Cherry J.M."/>
        </authorList>
    </citation>
    <scope>GENOME REANNOTATION</scope>
    <scope>SEQUENCE REVISION TO 302</scope>
    <source>
        <strain>ATCC 204508 / S288c</strain>
    </source>
</reference>
<reference key="3">
    <citation type="journal article" date="2007" name="Genome Res.">
        <title>Approaching a complete repository of sequence-verified protein-encoding clones for Saccharomyces cerevisiae.</title>
        <authorList>
            <person name="Hu Y."/>
            <person name="Rolfs A."/>
            <person name="Bhullar B."/>
            <person name="Murthy T.V.S."/>
            <person name="Zhu C."/>
            <person name="Berger M.F."/>
            <person name="Camargo A.A."/>
            <person name="Kelley F."/>
            <person name="McCarron S."/>
            <person name="Jepson D."/>
            <person name="Richardson A."/>
            <person name="Raphael J."/>
            <person name="Moreira D."/>
            <person name="Taycher E."/>
            <person name="Zuo D."/>
            <person name="Mohr S."/>
            <person name="Kane M.F."/>
            <person name="Williamson J."/>
            <person name="Simpson A.J.G."/>
            <person name="Bulyk M.L."/>
            <person name="Harlow E."/>
            <person name="Marsischky G."/>
            <person name="Kolodner R.D."/>
            <person name="LaBaer J."/>
        </authorList>
    </citation>
    <scope>NUCLEOTIDE SEQUENCE [GENOMIC DNA]</scope>
    <source>
        <strain>ATCC 204508 / S288c</strain>
    </source>
</reference>
<reference key="4">
    <citation type="journal article" date="1998" name="EMBO J.">
        <title>Receptors determine the cellular localization of a gamma-tubulin complex and thereby the site of microtubule formation.</title>
        <authorList>
            <person name="Knop M."/>
            <person name="Schiebel E."/>
        </authorList>
    </citation>
    <scope>FUNCTION</scope>
    <scope>SUBCELLULAR LOCATION</scope>
    <scope>INTERACTION WITH SPC97; SPC98 AND TUB4</scope>
</reference>
<reference key="5">
    <citation type="journal article" date="1998" name="J. Cell Biol.">
        <title>Analysis of the Saccharomyces spindle pole by matrix-assisted laser desorption/ionization (MALDI) mass spectrometry.</title>
        <authorList>
            <person name="Wigge P.A."/>
            <person name="Jensen O.N."/>
            <person name="Holmes S."/>
            <person name="Soues S."/>
            <person name="Mann M."/>
            <person name="Kilmartin J.V."/>
        </authorList>
    </citation>
    <scope>SUBCELLULAR LOCATION</scope>
    <scope>IDENTIFICATION BY MASS SPECTROMETRY</scope>
</reference>
<reference key="6">
    <citation type="journal article" date="1998" name="J. Cell Biol.">
        <title>The yeast spindle pole body component Spc72p interacts with Stu2p and is required for proper microtubule assembly.</title>
        <authorList>
            <person name="Chen X.P."/>
            <person name="Yin H."/>
            <person name="Huffaker T.C."/>
        </authorList>
    </citation>
    <scope>FUNCTION</scope>
    <scope>SUBCELLULAR LOCATION</scope>
    <scope>SUBUNIT</scope>
    <scope>INTERACTION WITH STU2</scope>
</reference>
<reference key="7">
    <citation type="journal article" date="1998" name="J. Cell Sci.">
        <title>SPC72: a spindle pole component required for spindle orientation in the yeast Saccharomyces cerevisiae.</title>
        <authorList>
            <person name="Soues S."/>
            <person name="Adams I.R."/>
        </authorList>
    </citation>
    <scope>FUNCTION</scope>
    <scope>SUBCELLULAR LOCATION</scope>
</reference>
<reference key="8">
    <citation type="journal article" date="1999" name="EMBO J.">
        <title>Interaction of the yeast gamma-tubulin complex-binding protein Spc72p with Kar1p is essential for microtubule function during karyogamy.</title>
        <authorList>
            <person name="Pereira G."/>
            <person name="Grueneberg U."/>
            <person name="Knop M."/>
            <person name="Schiebel E."/>
        </authorList>
    </citation>
    <scope>FUNCTION</scope>
    <scope>SUBCELLULAR LOCATION</scope>
    <scope>INTERACTION WITH KAR1</scope>
</reference>
<reference key="9">
    <citation type="journal article" date="2003" name="Nature">
        <title>Global analysis of protein localization in budding yeast.</title>
        <authorList>
            <person name="Huh W.-K."/>
            <person name="Falvo J.V."/>
            <person name="Gerke L.C."/>
            <person name="Carroll A.S."/>
            <person name="Howson R.W."/>
            <person name="Weissman J.S."/>
            <person name="O'Shea E.K."/>
        </authorList>
    </citation>
    <scope>SUBCELLULAR LOCATION [LARGE SCALE ANALYSIS]</scope>
</reference>
<reference key="10">
    <citation type="journal article" date="2003" name="Nature">
        <title>Global analysis of protein expression in yeast.</title>
        <authorList>
            <person name="Ghaemmaghami S."/>
            <person name="Huh W.-K."/>
            <person name="Bower K."/>
            <person name="Howson R.W."/>
            <person name="Belle A."/>
            <person name="Dephoure N."/>
            <person name="O'Shea E.K."/>
            <person name="Weissman J.S."/>
        </authorList>
    </citation>
    <scope>LEVEL OF PROTEIN EXPRESSION [LARGE SCALE ANALYSIS]</scope>
</reference>
<reference key="11">
    <citation type="journal article" date="2007" name="Chem. Biol.">
        <title>A coupled chemical-genetic and bioinformatic approach to Polo-like kinase pathway exploration.</title>
        <authorList>
            <person name="Snead J.L."/>
            <person name="Sullivan M."/>
            <person name="Lowery D.M."/>
            <person name="Cohen M.S."/>
            <person name="Zhang C."/>
            <person name="Randle D.H."/>
            <person name="Taunton J."/>
            <person name="Yaffe M.B."/>
            <person name="Morgan D.O."/>
            <person name="Shokat K.M."/>
        </authorList>
    </citation>
    <scope>INTERACTION WITH CDC5</scope>
    <scope>PHOSPHORYLATION BY CDC5</scope>
</reference>
<reference key="12">
    <citation type="journal article" date="2007" name="J. Cell Biol.">
        <title>The yeast centrosome translates the positional information of the anaphase spindle into a cell cycle signal.</title>
        <authorList>
            <person name="Maekawa H."/>
            <person name="Priest C."/>
            <person name="Lechner J."/>
            <person name="Pereira G."/>
            <person name="Schiebel E."/>
        </authorList>
    </citation>
    <scope>FUNCTION</scope>
    <scope>PHOSPHORYLATION BY CDC5</scope>
    <scope>INTERACTION WITH KIN4</scope>
</reference>
<reference key="13">
    <citation type="journal article" date="2008" name="Mol. Cell. Proteomics">
        <title>A multidimensional chromatography technology for in-depth phosphoproteome analysis.</title>
        <authorList>
            <person name="Albuquerque C.P."/>
            <person name="Smolka M.B."/>
            <person name="Payne S.H."/>
            <person name="Bafna V."/>
            <person name="Eng J."/>
            <person name="Zhou H."/>
        </authorList>
    </citation>
    <scope>IDENTIFICATION BY MASS SPECTROMETRY [LARGE SCALE ANALYSIS]</scope>
</reference>
<reference key="14">
    <citation type="journal article" date="2009" name="Science">
        <title>Global analysis of Cdk1 substrate phosphorylation sites provides insights into evolution.</title>
        <authorList>
            <person name="Holt L.J."/>
            <person name="Tuch B.B."/>
            <person name="Villen J."/>
            <person name="Johnson A.D."/>
            <person name="Gygi S.P."/>
            <person name="Morgan D.O."/>
        </authorList>
    </citation>
    <scope>IDENTIFICATION BY MASS SPECTROMETRY [LARGE SCALE ANALYSIS]</scope>
</reference>
<organism>
    <name type="scientific">Saccharomyces cerevisiae (strain ATCC 204508 / S288c)</name>
    <name type="common">Baker's yeast</name>
    <dbReference type="NCBI Taxonomy" id="559292"/>
    <lineage>
        <taxon>Eukaryota</taxon>
        <taxon>Fungi</taxon>
        <taxon>Dikarya</taxon>
        <taxon>Ascomycota</taxon>
        <taxon>Saccharomycotina</taxon>
        <taxon>Saccharomycetes</taxon>
        <taxon>Saccharomycetales</taxon>
        <taxon>Saccharomycetaceae</taxon>
        <taxon>Saccharomyces</taxon>
    </lineage>
</organism>
<accession>P39723</accession>
<accession>D6VPG9</accession>
<accession>E9P941</accession>
<protein>
    <recommendedName>
        <fullName evidence="11">Gamma tubulin complex adapter SPC72</fullName>
    </recommendedName>
</protein>
<dbReference type="EMBL" id="U12980">
    <property type="protein sequence ID" value="AAC04984.1"/>
    <property type="molecule type" value="Genomic_DNA"/>
</dbReference>
<dbReference type="EMBL" id="AY723757">
    <property type="protein sequence ID" value="AAU09674.1"/>
    <property type="molecule type" value="Genomic_DNA"/>
</dbReference>
<dbReference type="EMBL" id="BK006935">
    <property type="protein sequence ID" value="DAA06939.2"/>
    <property type="molecule type" value="Genomic_DNA"/>
</dbReference>
<dbReference type="PIR" id="S51972">
    <property type="entry name" value="S51972"/>
</dbReference>
<dbReference type="RefSeq" id="NP_009352.2">
    <property type="nucleotide sequence ID" value="NM_001178192.2"/>
</dbReference>
<dbReference type="PDB" id="6MF5">
    <property type="method" value="X-ray"/>
    <property type="resolution" value="2.70 A"/>
    <property type="chains" value="C/D=227-237"/>
</dbReference>
<dbReference type="PDBsum" id="6MF5"/>
<dbReference type="SMR" id="P39723"/>
<dbReference type="BioGRID" id="31780">
    <property type="interactions" value="138"/>
</dbReference>
<dbReference type="DIP" id="DIP-868N"/>
<dbReference type="FunCoup" id="P39723">
    <property type="interactions" value="1756"/>
</dbReference>
<dbReference type="IntAct" id="P39723">
    <property type="interactions" value="38"/>
</dbReference>
<dbReference type="MINT" id="P39723"/>
<dbReference type="STRING" id="4932.YAL047C"/>
<dbReference type="iPTMnet" id="P39723"/>
<dbReference type="PaxDb" id="4932-YAL047C"/>
<dbReference type="PeptideAtlas" id="P39723"/>
<dbReference type="EnsemblFungi" id="YAL047C_mRNA">
    <property type="protein sequence ID" value="YAL047C"/>
    <property type="gene ID" value="YAL047C"/>
</dbReference>
<dbReference type="GeneID" id="851250"/>
<dbReference type="KEGG" id="sce:YAL047C"/>
<dbReference type="AGR" id="SGD:S000000045"/>
<dbReference type="SGD" id="S000000045">
    <property type="gene designation" value="SPC72"/>
</dbReference>
<dbReference type="VEuPathDB" id="FungiDB:YAL047C"/>
<dbReference type="eggNOG" id="ENOG502R9Z8">
    <property type="taxonomic scope" value="Eukaryota"/>
</dbReference>
<dbReference type="HOGENOM" id="CLU_016740_0_0_1"/>
<dbReference type="InParanoid" id="P39723"/>
<dbReference type="OMA" id="RKYNTER"/>
<dbReference type="OrthoDB" id="4052563at2759"/>
<dbReference type="BioCyc" id="YEAST:G3O-28854-MONOMER"/>
<dbReference type="BioGRID-ORCS" id="851250">
    <property type="hits" value="7 hits in 10 CRISPR screens"/>
</dbReference>
<dbReference type="CD-CODE" id="876000F7">
    <property type="entry name" value="Centrosome"/>
</dbReference>
<dbReference type="PRO" id="PR:P39723"/>
<dbReference type="Proteomes" id="UP000002311">
    <property type="component" value="Chromosome I"/>
</dbReference>
<dbReference type="RNAct" id="P39723">
    <property type="molecule type" value="protein"/>
</dbReference>
<dbReference type="GO" id="GO:1905721">
    <property type="term" value="C:mitotic spindle astral microtubule end"/>
    <property type="evidence" value="ECO:0000314"/>
    <property type="project" value="SGD"/>
</dbReference>
<dbReference type="GO" id="GO:0061499">
    <property type="term" value="C:outer plaque of mitotic spindle pole body"/>
    <property type="evidence" value="ECO:0000314"/>
    <property type="project" value="SGD"/>
</dbReference>
<dbReference type="GO" id="GO:0005824">
    <property type="term" value="C:outer plaque of spindle pole body"/>
    <property type="evidence" value="ECO:0000314"/>
    <property type="project" value="SGD"/>
</dbReference>
<dbReference type="GO" id="GO:0005876">
    <property type="term" value="C:spindle microtubule"/>
    <property type="evidence" value="ECO:0000314"/>
    <property type="project" value="SGD"/>
</dbReference>
<dbReference type="GO" id="GO:0005816">
    <property type="term" value="C:spindle pole body"/>
    <property type="evidence" value="ECO:0000314"/>
    <property type="project" value="SGD"/>
</dbReference>
<dbReference type="GO" id="GO:0099609">
    <property type="term" value="F:microtubule lateral binding"/>
    <property type="evidence" value="ECO:0000314"/>
    <property type="project" value="SGD"/>
</dbReference>
<dbReference type="GO" id="GO:0051010">
    <property type="term" value="F:microtubule plus-end binding"/>
    <property type="evidence" value="ECO:0000314"/>
    <property type="project" value="SGD"/>
</dbReference>
<dbReference type="GO" id="GO:0044877">
    <property type="term" value="F:protein-containing complex binding"/>
    <property type="evidence" value="ECO:0000314"/>
    <property type="project" value="SGD"/>
</dbReference>
<dbReference type="GO" id="GO:1990734">
    <property type="term" value="P:astral microtubule anchoring at mitotic spindle pole body"/>
    <property type="evidence" value="ECO:0000315"/>
    <property type="project" value="SGD"/>
</dbReference>
<dbReference type="GO" id="GO:0030953">
    <property type="term" value="P:astral microtubule organization"/>
    <property type="evidence" value="ECO:0000315"/>
    <property type="project" value="SGD"/>
</dbReference>
<dbReference type="GO" id="GO:0051301">
    <property type="term" value="P:cell division"/>
    <property type="evidence" value="ECO:0007669"/>
    <property type="project" value="UniProtKB-KW"/>
</dbReference>
<dbReference type="GO" id="GO:0031122">
    <property type="term" value="P:cytoplasmic microtubule organization"/>
    <property type="evidence" value="ECO:0000315"/>
    <property type="project" value="SGD"/>
</dbReference>
<dbReference type="GO" id="GO:0110121">
    <property type="term" value="P:gamma-tubulin complex localization to cytoplasmic side of mitotic spindle pole body"/>
    <property type="evidence" value="ECO:0000353"/>
    <property type="project" value="SGD"/>
</dbReference>
<dbReference type="GO" id="GO:0000741">
    <property type="term" value="P:karyogamy"/>
    <property type="evidence" value="ECO:0007669"/>
    <property type="project" value="UniProtKB-KW"/>
</dbReference>
<dbReference type="GO" id="GO:0007020">
    <property type="term" value="P:microtubule nucleation"/>
    <property type="evidence" value="ECO:0000315"/>
    <property type="project" value="SGD"/>
</dbReference>
<dbReference type="GO" id="GO:0031578">
    <property type="term" value="P:mitotic spindle orientation checkpoint signaling"/>
    <property type="evidence" value="ECO:0000316"/>
    <property type="project" value="SGD"/>
</dbReference>
<dbReference type="InterPro" id="IPR024545">
    <property type="entry name" value="Mto1-like_Mto2p-bd"/>
</dbReference>
<dbReference type="Pfam" id="PF12808">
    <property type="entry name" value="Mto2_bdg"/>
    <property type="match status" value="1"/>
</dbReference>
<sequence>MVRRWIPSGRHLRNNDNTGDDDDSEFTNSMDSGMSIPSLRDSMTTRSSHNDPIKPALMNDSNKVKNLEKELTNAKIKIQVLYEYIRRIPNKDGNAPSLGNDTDFRNSIIEGLNLEINKLKQDLKAKEVEYQDTLQFVQENLENSESIVNTINHLLSFILTHFNEQDENAHLLDKEERETLEETLELSSDYVLEKMDTLSKFIIQFLQDFLHSKSRAESKQDKEEFLSLAQSSPAGSQLESRDSPSSKEENTDGGYQNDEIHDSNNHIDTENVMANSTSLPISAVESRFEKTLDTQLEIVIENLHKEYDQFINSIRLKFEKSQKLEKIIASKLNEQSHLLDSLELEENSSSVIEKQDHLISQLKEKIESQSVLINNLEKLKEDIIKMKQNEKVLTKELETQTKINKLKENNWDSYINDLEKQINDLQIDKSEEFHVIQNQLDKLDLENYQLKNQLNTLDNQKLILSQYESNFIKFNQNLLLHLDSIFNILQKILQESSIAQFDRKMKSIKSVPNALKNLNLIQPKLESLYTFIETALESIINSYISSLISMETPEQPHQQGNELTATPNKELTLRIEELQRRWISERERRKLDANASEARIKALEQENESLRSKLFNLSINNP</sequence>
<feature type="chain" id="PRO_0000202421" description="Gamma tubulin complex adapter SPC72">
    <location>
        <begin position="1"/>
        <end position="622"/>
    </location>
</feature>
<feature type="region of interest" description="Disordered" evidence="1">
    <location>
        <begin position="1"/>
        <end position="58"/>
    </location>
</feature>
<feature type="region of interest" description="Disordered" evidence="1">
    <location>
        <begin position="221"/>
        <end position="263"/>
    </location>
</feature>
<feature type="compositionally biased region" description="Polar residues" evidence="1">
    <location>
        <begin position="228"/>
        <end position="238"/>
    </location>
</feature>
<feature type="compositionally biased region" description="Basic and acidic residues" evidence="1">
    <location>
        <begin position="239"/>
        <end position="250"/>
    </location>
</feature>
<feature type="sequence conflict" description="In Ref. 1; AAC04984." evidence="11" ref="1">
    <original>N</original>
    <variation>I</variation>
    <location>
        <position position="302"/>
    </location>
</feature>
<feature type="strand" evidence="12">
    <location>
        <begin position="229"/>
        <end position="231"/>
    </location>
</feature>